<sequence length="84" mass="10494">MDNTNRLRRLHCHKQPKFTHSSQEVSSMKWEFINMTEQEEDLIFRMYRLVGDRWDLIARRVVGREAKEIERYWIMRNCDYFSHK</sequence>
<organism>
    <name type="scientific">Arabidopsis thaliana</name>
    <name type="common">Mouse-ear cress</name>
    <dbReference type="NCBI Taxonomy" id="3702"/>
    <lineage>
        <taxon>Eukaryota</taxon>
        <taxon>Viridiplantae</taxon>
        <taxon>Streptophyta</taxon>
        <taxon>Embryophyta</taxon>
        <taxon>Tracheophyta</taxon>
        <taxon>Spermatophyta</taxon>
        <taxon>Magnoliopsida</taxon>
        <taxon>eudicotyledons</taxon>
        <taxon>Gunneridae</taxon>
        <taxon>Pentapetalae</taxon>
        <taxon>rosids</taxon>
        <taxon>malvids</taxon>
        <taxon>Brassicales</taxon>
        <taxon>Brassicaceae</taxon>
        <taxon>Camelineae</taxon>
        <taxon>Arabidopsis</taxon>
    </lineage>
</organism>
<reference key="1">
    <citation type="journal article" date="2009" name="Curr. Biol.">
        <title>A single amino acid replacement in ETC2 shapes trichome patterning in natural Arabidopsis populations.</title>
        <authorList>
            <person name="Hilscher J."/>
            <person name="Schlotterer C."/>
            <person name="Hauser M.T."/>
        </authorList>
    </citation>
    <scope>NUCLEOTIDE SEQUENCE [GENOMIC DNA]</scope>
    <source>
        <strain>cv. Can-0</strain>
        <strain>cv. Columbia</strain>
        <strain>cv. Landsberg erecta</strain>
        <strain>cv. Oy-0</strain>
        <strain>cv. Wassilewskija</strain>
    </source>
</reference>
<reference key="2">
    <citation type="journal article" date="1999" name="Nature">
        <title>Sequence and analysis of chromosome 2 of the plant Arabidopsis thaliana.</title>
        <authorList>
            <person name="Lin X."/>
            <person name="Kaul S."/>
            <person name="Rounsley S.D."/>
            <person name="Shea T.P."/>
            <person name="Benito M.-I."/>
            <person name="Town C.D."/>
            <person name="Fujii C.Y."/>
            <person name="Mason T.M."/>
            <person name="Bowman C.L."/>
            <person name="Barnstead M.E."/>
            <person name="Feldblyum T.V."/>
            <person name="Buell C.R."/>
            <person name="Ketchum K.A."/>
            <person name="Lee J.J."/>
            <person name="Ronning C.M."/>
            <person name="Koo H.L."/>
            <person name="Moffat K.S."/>
            <person name="Cronin L.A."/>
            <person name="Shen M."/>
            <person name="Pai G."/>
            <person name="Van Aken S."/>
            <person name="Umayam L."/>
            <person name="Tallon L.J."/>
            <person name="Gill J.E."/>
            <person name="Adams M.D."/>
            <person name="Carrera A.J."/>
            <person name="Creasy T.H."/>
            <person name="Goodman H.M."/>
            <person name="Somerville C.R."/>
            <person name="Copenhaver G.P."/>
            <person name="Preuss D."/>
            <person name="Nierman W.C."/>
            <person name="White O."/>
            <person name="Eisen J.A."/>
            <person name="Salzberg S.L."/>
            <person name="Fraser C.M."/>
            <person name="Venter J.C."/>
        </authorList>
    </citation>
    <scope>NUCLEOTIDE SEQUENCE [LARGE SCALE GENOMIC DNA]</scope>
    <source>
        <strain>cv. Columbia</strain>
    </source>
</reference>
<reference key="3">
    <citation type="journal article" date="2017" name="Plant J.">
        <title>Araport11: a complete reannotation of the Arabidopsis thaliana reference genome.</title>
        <authorList>
            <person name="Cheng C.Y."/>
            <person name="Krishnakumar V."/>
            <person name="Chan A.P."/>
            <person name="Thibaud-Nissen F."/>
            <person name="Schobel S."/>
            <person name="Town C.D."/>
        </authorList>
    </citation>
    <scope>GENOME REANNOTATION</scope>
    <source>
        <strain>cv. Columbia</strain>
    </source>
</reference>
<reference key="4">
    <citation type="journal article" date="2006" name="Plant Mol. Biol.">
        <title>Features of Arabidopsis genes and genome discovered using full-length cDNAs.</title>
        <authorList>
            <person name="Alexandrov N.N."/>
            <person name="Troukhan M.E."/>
            <person name="Brover V.V."/>
            <person name="Tatarinova T."/>
            <person name="Flavell R.B."/>
            <person name="Feldmann K.A."/>
        </authorList>
    </citation>
    <scope>NUCLEOTIDE SEQUENCE [LARGE SCALE MRNA]</scope>
</reference>
<reference key="5">
    <citation type="journal article" date="2007" name="Development">
        <title>TRICHOMELESS1 regulates trichome patterning by suppressing GLABRA1 in Arabidopsis.</title>
        <authorList>
            <person name="Wang S."/>
            <person name="Kwak S.H."/>
            <person name="Zeng Q."/>
            <person name="Ellis B.E."/>
            <person name="Chen X.Y."/>
            <person name="Schiefelbein J."/>
            <person name="Chen J.G."/>
        </authorList>
    </citation>
    <scope>FUNCTION</scope>
    <scope>SUBCELLULAR LOCATION</scope>
    <scope>DISRUPTION PHENOTYPE</scope>
</reference>
<reference key="6">
    <citation type="journal article" date="2010" name="Plant Cell">
        <title>Temporal control of trichome distribution by microRNA156-targeted SPL genes in Arabidopsis thaliana.</title>
        <authorList>
            <person name="Yu N."/>
            <person name="Cai W.J."/>
            <person name="Wang S."/>
            <person name="Shan C.M."/>
            <person name="Wang L.J."/>
            <person name="Chen X.Y."/>
        </authorList>
    </citation>
    <scope>TISSUE SPECIFICITY</scope>
</reference>
<gene>
    <name type="primary">TCL1</name>
    <name type="ordered locus">At2g30432</name>
    <name type="ORF">T6B20</name>
</gene>
<evidence type="ECO:0000255" key="1">
    <source>
        <dbReference type="PROSITE-ProRule" id="PRU00133"/>
    </source>
</evidence>
<evidence type="ECO:0000269" key="2">
    <source>
    </source>
</evidence>
<evidence type="ECO:0000269" key="3">
    <source>
    </source>
</evidence>
<evidence type="ECO:0000305" key="4">
    <source>
    </source>
</evidence>
<name>TCL1_ARATH</name>
<keyword id="KW-0217">Developmental protein</keyword>
<keyword id="KW-0238">DNA-binding</keyword>
<keyword id="KW-0539">Nucleus</keyword>
<keyword id="KW-1185">Reference proteome</keyword>
<keyword id="KW-0678">Repressor</keyword>
<keyword id="KW-0804">Transcription</keyword>
<keyword id="KW-0805">Transcription regulation</keyword>
<protein>
    <recommendedName>
        <fullName>MYB-like transcription factor TCL1</fullName>
    </recommendedName>
    <alternativeName>
        <fullName>Protein TRICHOMELESS 1</fullName>
    </alternativeName>
</protein>
<accession>D3GKW6</accession>
<proteinExistence type="evidence at transcript level"/>
<feature type="chain" id="PRO_0000423050" description="MYB-like transcription factor TCL1">
    <location>
        <begin position="1"/>
        <end position="84"/>
    </location>
</feature>
<feature type="domain" description="Myb-like" evidence="1">
    <location>
        <begin position="36"/>
        <end position="73"/>
    </location>
</feature>
<dbReference type="EMBL" id="FJ972668">
    <property type="protein sequence ID" value="ADC36198.1"/>
    <property type="molecule type" value="Genomic_DNA"/>
</dbReference>
<dbReference type="EMBL" id="FJ972671">
    <property type="protein sequence ID" value="ADC36201.1"/>
    <property type="molecule type" value="Genomic_DNA"/>
</dbReference>
<dbReference type="EMBL" id="FJ972672">
    <property type="protein sequence ID" value="ADC36202.1"/>
    <property type="molecule type" value="Genomic_DNA"/>
</dbReference>
<dbReference type="EMBL" id="FJ972673">
    <property type="protein sequence ID" value="ADC36203.1"/>
    <property type="molecule type" value="Genomic_DNA"/>
</dbReference>
<dbReference type="EMBL" id="FJ972674">
    <property type="protein sequence ID" value="ADC36204.1"/>
    <property type="molecule type" value="Genomic_DNA"/>
</dbReference>
<dbReference type="EMBL" id="FJ972675">
    <property type="protein sequence ID" value="ADC36205.1"/>
    <property type="molecule type" value="Genomic_DNA"/>
</dbReference>
<dbReference type="EMBL" id="U93215">
    <property type="status" value="NOT_ANNOTATED_CDS"/>
    <property type="molecule type" value="Genomic_DNA"/>
</dbReference>
<dbReference type="EMBL" id="CP002685">
    <property type="protein sequence ID" value="AEC08388.1"/>
    <property type="molecule type" value="Genomic_DNA"/>
</dbReference>
<dbReference type="EMBL" id="DQ108777">
    <property type="status" value="NOT_ANNOTATED_CDS"/>
    <property type="molecule type" value="mRNA"/>
</dbReference>
<dbReference type="RefSeq" id="NP_001031445.1">
    <property type="nucleotide sequence ID" value="NM_001036368.3"/>
</dbReference>
<dbReference type="SMR" id="D3GKW6"/>
<dbReference type="BioGRID" id="528882">
    <property type="interactions" value="14"/>
</dbReference>
<dbReference type="FunCoup" id="D3GKW6">
    <property type="interactions" value="13"/>
</dbReference>
<dbReference type="IntAct" id="D3GKW6">
    <property type="interactions" value="15"/>
</dbReference>
<dbReference type="STRING" id="3702.D3GKW6"/>
<dbReference type="iPTMnet" id="D3GKW6"/>
<dbReference type="PaxDb" id="3702-AT2G30432.1"/>
<dbReference type="EnsemblPlants" id="AT2G30432.1">
    <property type="protein sequence ID" value="AT2G30432.1"/>
    <property type="gene ID" value="AT2G30432"/>
</dbReference>
<dbReference type="GeneID" id="3768521"/>
<dbReference type="Gramene" id="AT2G30432.1">
    <property type="protein sequence ID" value="AT2G30432.1"/>
    <property type="gene ID" value="AT2G30432"/>
</dbReference>
<dbReference type="KEGG" id="ath:AT2G30432"/>
<dbReference type="Araport" id="AT2G30432"/>
<dbReference type="TAIR" id="AT2G30432">
    <property type="gene designation" value="TCL1"/>
</dbReference>
<dbReference type="eggNOG" id="ENOG502S4DP">
    <property type="taxonomic scope" value="Eukaryota"/>
</dbReference>
<dbReference type="HOGENOM" id="CLU_178021_1_0_1"/>
<dbReference type="InParanoid" id="D3GKW6"/>
<dbReference type="OMA" id="SSIEWEC"/>
<dbReference type="PhylomeDB" id="D3GKW6"/>
<dbReference type="PRO" id="PR:D3GKW6"/>
<dbReference type="Proteomes" id="UP000006548">
    <property type="component" value="Chromosome 2"/>
</dbReference>
<dbReference type="ExpressionAtlas" id="D3GKW6">
    <property type="expression patterns" value="baseline and differential"/>
</dbReference>
<dbReference type="GO" id="GO:0005634">
    <property type="term" value="C:nucleus"/>
    <property type="evidence" value="ECO:0000314"/>
    <property type="project" value="UniProtKB"/>
</dbReference>
<dbReference type="GO" id="GO:0003677">
    <property type="term" value="F:DNA binding"/>
    <property type="evidence" value="ECO:0007669"/>
    <property type="project" value="UniProtKB-KW"/>
</dbReference>
<dbReference type="GO" id="GO:0010154">
    <property type="term" value="P:fruit development"/>
    <property type="evidence" value="ECO:0000315"/>
    <property type="project" value="TAIR"/>
</dbReference>
<dbReference type="GO" id="GO:0006355">
    <property type="term" value="P:regulation of DNA-templated transcription"/>
    <property type="evidence" value="ECO:0000314"/>
    <property type="project" value="UniProtKB"/>
</dbReference>
<dbReference type="GO" id="GO:2000039">
    <property type="term" value="P:regulation of trichome morphogenesis"/>
    <property type="evidence" value="ECO:0000315"/>
    <property type="project" value="TAIR"/>
</dbReference>
<dbReference type="CDD" id="cd00167">
    <property type="entry name" value="SANT"/>
    <property type="match status" value="1"/>
</dbReference>
<dbReference type="Gene3D" id="1.10.10.60">
    <property type="entry name" value="Homeodomain-like"/>
    <property type="match status" value="1"/>
</dbReference>
<dbReference type="InterPro" id="IPR009057">
    <property type="entry name" value="Homeodomain-like_sf"/>
</dbReference>
<dbReference type="InterPro" id="IPR015495">
    <property type="entry name" value="Myb_TF_plants"/>
</dbReference>
<dbReference type="InterPro" id="IPR001005">
    <property type="entry name" value="SANT/Myb"/>
</dbReference>
<dbReference type="PANTHER" id="PTHR47998:SF51">
    <property type="entry name" value="MYB-LIKE TRANSCRIPTION FACTOR ETC2-RELATED"/>
    <property type="match status" value="1"/>
</dbReference>
<dbReference type="PANTHER" id="PTHR47998">
    <property type="entry name" value="TRANSCRIPTION FACTOR MYB51-LIKE ISOFORM X1"/>
    <property type="match status" value="1"/>
</dbReference>
<dbReference type="Pfam" id="PF00249">
    <property type="entry name" value="Myb_DNA-binding"/>
    <property type="match status" value="1"/>
</dbReference>
<dbReference type="SMART" id="SM00717">
    <property type="entry name" value="SANT"/>
    <property type="match status" value="1"/>
</dbReference>
<dbReference type="SUPFAM" id="SSF46689">
    <property type="entry name" value="Homeodomain-like"/>
    <property type="match status" value="1"/>
</dbReference>
<dbReference type="PROSITE" id="PS50090">
    <property type="entry name" value="MYB_LIKE"/>
    <property type="match status" value="1"/>
</dbReference>
<comment type="function">
    <text evidence="2">MYB-type transcription factor involved in trichome cell specification. Acts as a negative regulator of trichome patterning and formation by direct binding to the cis-acting regulatory elements of GL1, thus suppressing the expression of GL1.</text>
</comment>
<comment type="subcellular location">
    <subcellularLocation>
        <location evidence="2">Nucleus</location>
    </subcellularLocation>
</comment>
<comment type="tissue specificity">
    <text evidence="3">Expressed in inflorescences and trichomes of rosette and cauline leaves.</text>
</comment>
<comment type="disruption phenotype">
    <text evidence="2">Trichome formation on inflorescence stems and pedicels.</text>
</comment>
<comment type="miscellaneous">
    <text evidence="4">Plants over-expressing TCL1 does not have any trichomes on rosette leaves, inflorescence stems, cauline leaves or floral organs.</text>
</comment>